<protein>
    <recommendedName>
        <fullName evidence="1">UvrABC system protein B</fullName>
        <shortName evidence="1">Protein UvrB</shortName>
    </recommendedName>
    <alternativeName>
        <fullName evidence="1">Excinuclease ABC subunit B</fullName>
    </alternativeName>
</protein>
<evidence type="ECO:0000255" key="1">
    <source>
        <dbReference type="HAMAP-Rule" id="MF_00204"/>
    </source>
</evidence>
<keyword id="KW-0067">ATP-binding</keyword>
<keyword id="KW-0963">Cytoplasm</keyword>
<keyword id="KW-0227">DNA damage</keyword>
<keyword id="KW-0228">DNA excision</keyword>
<keyword id="KW-0234">DNA repair</keyword>
<keyword id="KW-0267">Excision nuclease</keyword>
<keyword id="KW-0347">Helicase</keyword>
<keyword id="KW-0378">Hydrolase</keyword>
<keyword id="KW-0547">Nucleotide-binding</keyword>
<keyword id="KW-0742">SOS response</keyword>
<gene>
    <name evidence="1" type="primary">uvrB</name>
    <name type="ordered locus">Dvul_1529</name>
</gene>
<dbReference type="EMBL" id="CP000527">
    <property type="protein sequence ID" value="ABM28546.1"/>
    <property type="molecule type" value="Genomic_DNA"/>
</dbReference>
<dbReference type="RefSeq" id="WP_011792330.1">
    <property type="nucleotide sequence ID" value="NC_008751.1"/>
</dbReference>
<dbReference type="SMR" id="A1VDN0"/>
<dbReference type="KEGG" id="dvl:Dvul_1529"/>
<dbReference type="HOGENOM" id="CLU_009621_2_1_7"/>
<dbReference type="Proteomes" id="UP000009173">
    <property type="component" value="Chromosome"/>
</dbReference>
<dbReference type="GO" id="GO:0005737">
    <property type="term" value="C:cytoplasm"/>
    <property type="evidence" value="ECO:0007669"/>
    <property type="project" value="UniProtKB-SubCell"/>
</dbReference>
<dbReference type="GO" id="GO:0009380">
    <property type="term" value="C:excinuclease repair complex"/>
    <property type="evidence" value="ECO:0007669"/>
    <property type="project" value="InterPro"/>
</dbReference>
<dbReference type="GO" id="GO:0005524">
    <property type="term" value="F:ATP binding"/>
    <property type="evidence" value="ECO:0007669"/>
    <property type="project" value="UniProtKB-UniRule"/>
</dbReference>
<dbReference type="GO" id="GO:0016887">
    <property type="term" value="F:ATP hydrolysis activity"/>
    <property type="evidence" value="ECO:0007669"/>
    <property type="project" value="InterPro"/>
</dbReference>
<dbReference type="GO" id="GO:0003677">
    <property type="term" value="F:DNA binding"/>
    <property type="evidence" value="ECO:0007669"/>
    <property type="project" value="UniProtKB-UniRule"/>
</dbReference>
<dbReference type="GO" id="GO:0009381">
    <property type="term" value="F:excinuclease ABC activity"/>
    <property type="evidence" value="ECO:0007669"/>
    <property type="project" value="UniProtKB-UniRule"/>
</dbReference>
<dbReference type="GO" id="GO:0004386">
    <property type="term" value="F:helicase activity"/>
    <property type="evidence" value="ECO:0007669"/>
    <property type="project" value="UniProtKB-KW"/>
</dbReference>
<dbReference type="GO" id="GO:0006289">
    <property type="term" value="P:nucleotide-excision repair"/>
    <property type="evidence" value="ECO:0007669"/>
    <property type="project" value="UniProtKB-UniRule"/>
</dbReference>
<dbReference type="GO" id="GO:0009432">
    <property type="term" value="P:SOS response"/>
    <property type="evidence" value="ECO:0007669"/>
    <property type="project" value="UniProtKB-UniRule"/>
</dbReference>
<dbReference type="CDD" id="cd17916">
    <property type="entry name" value="DEXHc_UvrB"/>
    <property type="match status" value="1"/>
</dbReference>
<dbReference type="CDD" id="cd18790">
    <property type="entry name" value="SF2_C_UvrB"/>
    <property type="match status" value="1"/>
</dbReference>
<dbReference type="Gene3D" id="3.40.50.300">
    <property type="entry name" value="P-loop containing nucleotide triphosphate hydrolases"/>
    <property type="match status" value="3"/>
</dbReference>
<dbReference type="Gene3D" id="4.10.860.10">
    <property type="entry name" value="UVR domain"/>
    <property type="match status" value="1"/>
</dbReference>
<dbReference type="HAMAP" id="MF_00204">
    <property type="entry name" value="UvrB"/>
    <property type="match status" value="1"/>
</dbReference>
<dbReference type="InterPro" id="IPR006935">
    <property type="entry name" value="Helicase/UvrB_N"/>
</dbReference>
<dbReference type="InterPro" id="IPR014001">
    <property type="entry name" value="Helicase_ATP-bd"/>
</dbReference>
<dbReference type="InterPro" id="IPR001650">
    <property type="entry name" value="Helicase_C-like"/>
</dbReference>
<dbReference type="InterPro" id="IPR027417">
    <property type="entry name" value="P-loop_NTPase"/>
</dbReference>
<dbReference type="InterPro" id="IPR001943">
    <property type="entry name" value="UVR_dom"/>
</dbReference>
<dbReference type="InterPro" id="IPR036876">
    <property type="entry name" value="UVR_dom_sf"/>
</dbReference>
<dbReference type="InterPro" id="IPR004807">
    <property type="entry name" value="UvrB"/>
</dbReference>
<dbReference type="InterPro" id="IPR041471">
    <property type="entry name" value="UvrB_inter"/>
</dbReference>
<dbReference type="InterPro" id="IPR024759">
    <property type="entry name" value="UvrB_YAD/RRR_dom"/>
</dbReference>
<dbReference type="NCBIfam" id="NF003673">
    <property type="entry name" value="PRK05298.1"/>
    <property type="match status" value="1"/>
</dbReference>
<dbReference type="NCBIfam" id="TIGR00631">
    <property type="entry name" value="uvrb"/>
    <property type="match status" value="1"/>
</dbReference>
<dbReference type="PANTHER" id="PTHR24029">
    <property type="entry name" value="UVRABC SYSTEM PROTEIN B"/>
    <property type="match status" value="1"/>
</dbReference>
<dbReference type="PANTHER" id="PTHR24029:SF0">
    <property type="entry name" value="UVRABC SYSTEM PROTEIN B"/>
    <property type="match status" value="1"/>
</dbReference>
<dbReference type="Pfam" id="PF00271">
    <property type="entry name" value="Helicase_C"/>
    <property type="match status" value="1"/>
</dbReference>
<dbReference type="Pfam" id="PF04851">
    <property type="entry name" value="ResIII"/>
    <property type="match status" value="1"/>
</dbReference>
<dbReference type="Pfam" id="PF02151">
    <property type="entry name" value="UVR"/>
    <property type="match status" value="1"/>
</dbReference>
<dbReference type="Pfam" id="PF12344">
    <property type="entry name" value="UvrB"/>
    <property type="match status" value="1"/>
</dbReference>
<dbReference type="Pfam" id="PF17757">
    <property type="entry name" value="UvrB_inter"/>
    <property type="match status" value="1"/>
</dbReference>
<dbReference type="SMART" id="SM00487">
    <property type="entry name" value="DEXDc"/>
    <property type="match status" value="1"/>
</dbReference>
<dbReference type="SMART" id="SM00490">
    <property type="entry name" value="HELICc"/>
    <property type="match status" value="1"/>
</dbReference>
<dbReference type="SUPFAM" id="SSF46600">
    <property type="entry name" value="C-terminal UvrC-binding domain of UvrB"/>
    <property type="match status" value="1"/>
</dbReference>
<dbReference type="SUPFAM" id="SSF52540">
    <property type="entry name" value="P-loop containing nucleoside triphosphate hydrolases"/>
    <property type="match status" value="2"/>
</dbReference>
<dbReference type="PROSITE" id="PS51192">
    <property type="entry name" value="HELICASE_ATP_BIND_1"/>
    <property type="match status" value="1"/>
</dbReference>
<dbReference type="PROSITE" id="PS51194">
    <property type="entry name" value="HELICASE_CTER"/>
    <property type="match status" value="1"/>
</dbReference>
<dbReference type="PROSITE" id="PS50151">
    <property type="entry name" value="UVR"/>
    <property type="match status" value="1"/>
</dbReference>
<proteinExistence type="inferred from homology"/>
<sequence>MADTCFRLHTEFEPTGDQPEAIGQIVANLGQGVRDQVLLGVTGSGKTFTVANVIAACNRPALILAPNKTLAAQLYNEFRALFPDNAVEYFVSYYDYYQPEAYVPASDTYIEKDSSINDNIDKLRHAATHALLTRRDVVIVASVSCIYGLGSPEYYARLVIPVECGQRFSMDALMTRLVEVQYQRNDFDFHRGTFRVRGDVLEVIPAYHHERALRIEFFGDDIDAISEIDPLTGEVLGSVGKTVIYPASHYVSDRDNLVRAMSDIRDELGERLREYQSANRLVEAQRLEQRTMLDLEMMEELGYCNGIENYSRHLDGRAAGQPPSCLLDYFPDDFLLFVDESHITVPQVGAMYKGDRSRKSTLVDFGFRLPSALDNRPLEFAEFLTRINQTVYVSATPGKWELDRSQGVIAEQIIRPTGLVDPVVEVRPTRGQVDDLLAECRARAARDERVLITTLTKRMAEDLTEHLGNMGLSVRYLHSDIDTMERMAIIQALRRGECDVLVGINLLREGLDIPEVSLVSILDADKEGFLRSTGSLIQTFGRAARNAAGRVILYADTVTASMRAAMDETARRRERQQAWNEANGIEPRTIRKSLDTPFDAIYSAASEGGKGRGRGRGRQAAPAVENVAEYGTSPEDMAKHIQKLEREMREAAKELEFERAATLRDRIRLLRERLIEA</sequence>
<comment type="function">
    <text evidence="1">The UvrABC repair system catalyzes the recognition and processing of DNA lesions. A damage recognition complex composed of 2 UvrA and 2 UvrB subunits scans DNA for abnormalities. Upon binding of the UvrA(2)B(2) complex to a putative damaged site, the DNA wraps around one UvrB monomer. DNA wrap is dependent on ATP binding by UvrB and probably causes local melting of the DNA helix, facilitating insertion of UvrB beta-hairpin between the DNA strands. Then UvrB probes one DNA strand for the presence of a lesion. If a lesion is found the UvrA subunits dissociate and the UvrB-DNA preincision complex is formed. This complex is subsequently bound by UvrC and the second UvrB is released. If no lesion is found, the DNA wraps around the other UvrB subunit that will check the other stand for damage.</text>
</comment>
<comment type="subunit">
    <text evidence="1">Forms a heterotetramer with UvrA during the search for lesions. Interacts with UvrC in an incision complex.</text>
</comment>
<comment type="subcellular location">
    <subcellularLocation>
        <location evidence="1">Cytoplasm</location>
    </subcellularLocation>
</comment>
<comment type="domain">
    <text evidence="1">The beta-hairpin motif is involved in DNA binding.</text>
</comment>
<comment type="similarity">
    <text evidence="1">Belongs to the UvrB family.</text>
</comment>
<accession>A1VDN0</accession>
<organism>
    <name type="scientific">Nitratidesulfovibrio vulgaris (strain DP4)</name>
    <name type="common">Desulfovibrio vulgaris</name>
    <dbReference type="NCBI Taxonomy" id="391774"/>
    <lineage>
        <taxon>Bacteria</taxon>
        <taxon>Pseudomonadati</taxon>
        <taxon>Thermodesulfobacteriota</taxon>
        <taxon>Desulfovibrionia</taxon>
        <taxon>Desulfovibrionales</taxon>
        <taxon>Desulfovibrionaceae</taxon>
        <taxon>Nitratidesulfovibrio</taxon>
    </lineage>
</organism>
<feature type="chain" id="PRO_1000077885" description="UvrABC system protein B">
    <location>
        <begin position="1"/>
        <end position="677"/>
    </location>
</feature>
<feature type="domain" description="Helicase ATP-binding" evidence="1">
    <location>
        <begin position="27"/>
        <end position="192"/>
    </location>
</feature>
<feature type="domain" description="Helicase C-terminal" evidence="1">
    <location>
        <begin position="432"/>
        <end position="594"/>
    </location>
</feature>
<feature type="domain" description="UVR" evidence="1">
    <location>
        <begin position="638"/>
        <end position="673"/>
    </location>
</feature>
<feature type="short sequence motif" description="Beta-hairpin">
    <location>
        <begin position="93"/>
        <end position="116"/>
    </location>
</feature>
<feature type="binding site" evidence="1">
    <location>
        <begin position="40"/>
        <end position="47"/>
    </location>
    <ligand>
        <name>ATP</name>
        <dbReference type="ChEBI" id="CHEBI:30616"/>
    </ligand>
</feature>
<name>UVRB_NITV4</name>
<reference key="1">
    <citation type="journal article" date="2009" name="Environ. Microbiol.">
        <title>Contribution of mobile genetic elements to Desulfovibrio vulgaris genome plasticity.</title>
        <authorList>
            <person name="Walker C.B."/>
            <person name="Stolyar S."/>
            <person name="Chivian D."/>
            <person name="Pinel N."/>
            <person name="Gabster J.A."/>
            <person name="Dehal P.S."/>
            <person name="He Z."/>
            <person name="Yang Z.K."/>
            <person name="Yen H.C."/>
            <person name="Zhou J."/>
            <person name="Wall J.D."/>
            <person name="Hazen T.C."/>
            <person name="Arkin A.P."/>
            <person name="Stahl D.A."/>
        </authorList>
    </citation>
    <scope>NUCLEOTIDE SEQUENCE [LARGE SCALE GENOMIC DNA]</scope>
    <source>
        <strain>DP4</strain>
    </source>
</reference>